<dbReference type="EC" id="3.6.4.13" evidence="14"/>
<dbReference type="EMBL" id="Z37166">
    <property type="protein sequence ID" value="CAA85523.1"/>
    <property type="molecule type" value="mRNA"/>
</dbReference>
<dbReference type="EMBL" id="BT009909">
    <property type="protein sequence ID" value="AAP88911.1"/>
    <property type="molecule type" value="mRNA"/>
</dbReference>
<dbReference type="EMBL" id="AK222912">
    <property type="protein sequence ID" value="BAD96632.1"/>
    <property type="molecule type" value="mRNA"/>
</dbReference>
<dbReference type="EMBL" id="AB088115">
    <property type="protein sequence ID" value="BAC54953.1"/>
    <property type="molecule type" value="Genomic_DNA"/>
</dbReference>
<dbReference type="EMBL" id="AB103621">
    <property type="protein sequence ID" value="BAF31287.1"/>
    <property type="molecule type" value="Genomic_DNA"/>
</dbReference>
<dbReference type="EMBL" id="AB202112">
    <property type="protein sequence ID" value="BAE78637.1"/>
    <property type="molecule type" value="Genomic_DNA"/>
</dbReference>
<dbReference type="EMBL" id="BA000025">
    <property type="protein sequence ID" value="BAB63306.1"/>
    <property type="molecule type" value="Genomic_DNA"/>
</dbReference>
<dbReference type="EMBL" id="AL662801">
    <property type="status" value="NOT_ANNOTATED_CDS"/>
    <property type="molecule type" value="Genomic_DNA"/>
</dbReference>
<dbReference type="EMBL" id="AL662847">
    <property type="status" value="NOT_ANNOTATED_CDS"/>
    <property type="molecule type" value="Genomic_DNA"/>
</dbReference>
<dbReference type="EMBL" id="BX001040">
    <property type="status" value="NOT_ANNOTATED_CDS"/>
    <property type="molecule type" value="Genomic_DNA"/>
</dbReference>
<dbReference type="EMBL" id="BX248516">
    <property type="status" value="NOT_ANNOTATED_CDS"/>
    <property type="molecule type" value="Genomic_DNA"/>
</dbReference>
<dbReference type="EMBL" id="BX927320">
    <property type="status" value="NOT_ANNOTATED_CDS"/>
    <property type="molecule type" value="Genomic_DNA"/>
</dbReference>
<dbReference type="EMBL" id="CR753820">
    <property type="status" value="NOT_ANNOTATED_CDS"/>
    <property type="molecule type" value="Genomic_DNA"/>
</dbReference>
<dbReference type="EMBL" id="CR753864">
    <property type="status" value="NOT_ANNOTATED_CDS"/>
    <property type="molecule type" value="Genomic_DNA"/>
</dbReference>
<dbReference type="EMBL" id="CH471081">
    <property type="protein sequence ID" value="EAX03404.1"/>
    <property type="molecule type" value="Genomic_DNA"/>
</dbReference>
<dbReference type="EMBL" id="BC000361">
    <property type="protein sequence ID" value="AAH00361.1"/>
    <property type="molecule type" value="mRNA"/>
</dbReference>
<dbReference type="EMBL" id="BC013006">
    <property type="protein sequence ID" value="AAH13006.1"/>
    <property type="molecule type" value="mRNA"/>
</dbReference>
<dbReference type="EMBL" id="AF029061">
    <property type="protein sequence ID" value="AAB94615.1"/>
    <property type="molecule type" value="Genomic_DNA"/>
</dbReference>
<dbReference type="EMBL" id="AF029062">
    <property type="protein sequence ID" value="AAC63046.1"/>
    <property type="molecule type" value="Genomic_DNA"/>
</dbReference>
<dbReference type="CCDS" id="CCDS4697.1">
    <molecule id="Q13838-1"/>
</dbReference>
<dbReference type="PIR" id="I37201">
    <property type="entry name" value="I37201"/>
</dbReference>
<dbReference type="RefSeq" id="NP_004631.1">
    <molecule id="Q13838-1"/>
    <property type="nucleotide sequence ID" value="NM_004640.7"/>
</dbReference>
<dbReference type="RefSeq" id="NP_542165.1">
    <molecule id="Q13838-1"/>
    <property type="nucleotide sequence ID" value="NM_080598.6"/>
</dbReference>
<dbReference type="PDB" id="1T5I">
    <property type="method" value="X-ray"/>
    <property type="resolution" value="1.90 A"/>
    <property type="chains" value="A=259-428"/>
</dbReference>
<dbReference type="PDB" id="1T6N">
    <property type="method" value="X-ray"/>
    <property type="resolution" value="1.94 A"/>
    <property type="chains" value="A/B=34-251"/>
</dbReference>
<dbReference type="PDB" id="1XTI">
    <property type="method" value="X-ray"/>
    <property type="resolution" value="1.95 A"/>
    <property type="chains" value="A=46-428"/>
</dbReference>
<dbReference type="PDB" id="1XTJ">
    <property type="method" value="X-ray"/>
    <property type="resolution" value="2.70 A"/>
    <property type="chains" value="A=44-423"/>
</dbReference>
<dbReference type="PDB" id="1XTK">
    <property type="method" value="X-ray"/>
    <property type="resolution" value="2.40 A"/>
    <property type="chains" value="A=45-428"/>
</dbReference>
<dbReference type="PDB" id="7APK">
    <property type="method" value="EM"/>
    <property type="resolution" value="3.30 A"/>
    <property type="chains" value="H/P/h/p=1-428"/>
</dbReference>
<dbReference type="PDB" id="7ZNK">
    <property type="method" value="EM"/>
    <property type="resolution" value="3.90 A"/>
    <property type="chains" value="H/P/h/p=1-428"/>
</dbReference>
<dbReference type="PDB" id="7ZNL">
    <property type="method" value="EM"/>
    <property type="resolution" value="3.45 A"/>
    <property type="chains" value="H/P/h/p=1-428"/>
</dbReference>
<dbReference type="PDB" id="8ENK">
    <property type="method" value="X-ray"/>
    <property type="resolution" value="2.50 A"/>
    <property type="chains" value="A/B=44-428"/>
</dbReference>
<dbReference type="PDBsum" id="1T5I"/>
<dbReference type="PDBsum" id="1T6N"/>
<dbReference type="PDBsum" id="1XTI"/>
<dbReference type="PDBsum" id="1XTJ"/>
<dbReference type="PDBsum" id="1XTK"/>
<dbReference type="PDBsum" id="7APK"/>
<dbReference type="PDBsum" id="7ZNK"/>
<dbReference type="PDBsum" id="7ZNL"/>
<dbReference type="PDBsum" id="8ENK"/>
<dbReference type="EMDB" id="EMD-11857"/>
<dbReference type="EMDB" id="EMD-14804"/>
<dbReference type="EMDB" id="EMD-14808"/>
<dbReference type="SMR" id="Q13838"/>
<dbReference type="BioGRID" id="113649">
    <property type="interactions" value="588"/>
</dbReference>
<dbReference type="ComplexPortal" id="CPX-2488">
    <property type="entry name" value="TREX transcription-export complex, DX39B variant"/>
</dbReference>
<dbReference type="CORUM" id="Q13838"/>
<dbReference type="FunCoup" id="Q13838">
    <property type="interactions" value="4053"/>
</dbReference>
<dbReference type="IntAct" id="Q13838">
    <property type="interactions" value="149"/>
</dbReference>
<dbReference type="MINT" id="Q13838"/>
<dbReference type="STRING" id="9606.ENSP00000416269"/>
<dbReference type="DrugBank" id="DB11638">
    <property type="generic name" value="Artenimol"/>
</dbReference>
<dbReference type="TCDB" id="3.A.18.1.1">
    <property type="family name" value="the nuclear mrna exporter (mrna-e) family"/>
</dbReference>
<dbReference type="GlyGen" id="Q13838">
    <property type="glycosylation" value="1 site, 1 O-linked glycan (1 site)"/>
</dbReference>
<dbReference type="iPTMnet" id="Q13838"/>
<dbReference type="MetOSite" id="Q13838"/>
<dbReference type="PhosphoSitePlus" id="Q13838"/>
<dbReference type="SwissPalm" id="Q13838"/>
<dbReference type="BioMuta" id="DDX39B"/>
<dbReference type="DMDM" id="2500529"/>
<dbReference type="jPOST" id="Q13838"/>
<dbReference type="MassIVE" id="Q13838"/>
<dbReference type="PaxDb" id="9606-ENSP00000379475"/>
<dbReference type="PeptideAtlas" id="Q13838"/>
<dbReference type="ProteomicsDB" id="59701">
    <molecule id="Q13838-1"/>
</dbReference>
<dbReference type="ProteomicsDB" id="59702">
    <molecule id="Q13838-2"/>
</dbReference>
<dbReference type="Pumba" id="Q13838"/>
<dbReference type="Antibodypedia" id="27068">
    <property type="antibodies" value="366 antibodies from 30 providers"/>
</dbReference>
<dbReference type="DNASU" id="7919"/>
<dbReference type="Ensembl" id="ENST00000383508.6">
    <molecule id="Q13838-1"/>
    <property type="protein sequence ID" value="ENSP00000373000.2"/>
    <property type="gene ID" value="ENSG00000215425.11"/>
</dbReference>
<dbReference type="Ensembl" id="ENST00000396172.6">
    <molecule id="Q13838-1"/>
    <property type="protein sequence ID" value="ENSP00000379475.1"/>
    <property type="gene ID" value="ENSG00000198563.14"/>
</dbReference>
<dbReference type="Ensembl" id="ENST00000400295.5">
    <molecule id="Q13838-1"/>
    <property type="protein sequence ID" value="ENSP00000383151.1"/>
    <property type="gene ID" value="ENSG00000215425.11"/>
</dbReference>
<dbReference type="Ensembl" id="ENST00000400296.5">
    <molecule id="Q13838-1"/>
    <property type="protein sequence ID" value="ENSP00000383152.1"/>
    <property type="gene ID" value="ENSG00000215425.11"/>
</dbReference>
<dbReference type="Ensembl" id="ENST00000412106.5">
    <molecule id="Q13838-1"/>
    <property type="protein sequence ID" value="ENSP00000393712.1"/>
    <property type="gene ID" value="ENSG00000225073.10"/>
</dbReference>
<dbReference type="Ensembl" id="ENST00000412330.5">
    <molecule id="Q13838-1"/>
    <property type="protein sequence ID" value="ENSP00000398775.1"/>
    <property type="gene ID" value="ENSG00000225859.10"/>
</dbReference>
<dbReference type="Ensembl" id="ENST00000413678.5">
    <molecule id="Q13838-1"/>
    <property type="protein sequence ID" value="ENSP00000391463.1"/>
    <property type="gene ID" value="ENSG00000229496.10"/>
</dbReference>
<dbReference type="Ensembl" id="ENST00000414440.5">
    <molecule id="Q13838-1"/>
    <property type="protein sequence ID" value="ENSP00000411853.1"/>
    <property type="gene ID" value="ENSG00000229496.10"/>
</dbReference>
<dbReference type="Ensembl" id="ENST00000415689.5">
    <molecule id="Q13838-1"/>
    <property type="protein sequence ID" value="ENSP00000390999.1"/>
    <property type="gene ID" value="ENSG00000225073.10"/>
</dbReference>
<dbReference type="Ensembl" id="ENST00000416863.5">
    <molecule id="Q13838-1"/>
    <property type="protein sequence ID" value="ENSP00000407419.1"/>
    <property type="gene ID" value="ENSG00000229496.10"/>
</dbReference>
<dbReference type="Ensembl" id="ENST00000430784.5">
    <molecule id="Q13838-1"/>
    <property type="protein sequence ID" value="ENSP00000399030.1"/>
    <property type="gene ID" value="ENSG00000235439.10"/>
</dbReference>
<dbReference type="Ensembl" id="ENST00000431360.5">
    <molecule id="Q13838-1"/>
    <property type="protein sequence ID" value="ENSP00000404695.1"/>
    <property type="gene ID" value="ENSG00000235439.10"/>
</dbReference>
<dbReference type="Ensembl" id="ENST00000441425.5">
    <molecule id="Q13838-1"/>
    <property type="protein sequence ID" value="ENSP00000388880.1"/>
    <property type="gene ID" value="ENSG00000230624.10"/>
</dbReference>
<dbReference type="Ensembl" id="ENST00000445218.5">
    <molecule id="Q13838-1"/>
    <property type="protein sequence ID" value="ENSP00000411136.1"/>
    <property type="gene ID" value="ENSG00000225859.10"/>
</dbReference>
<dbReference type="Ensembl" id="ENST00000448296.5">
    <molecule id="Q13838-1"/>
    <property type="protein sequence ID" value="ENSP00000405560.1"/>
    <property type="gene ID" value="ENSG00000225859.10"/>
</dbReference>
<dbReference type="Ensembl" id="ENST00000453138.5">
    <molecule id="Q13838-1"/>
    <property type="protein sequence ID" value="ENSP00000387994.1"/>
    <property type="gene ID" value="ENSG00000230624.10"/>
</dbReference>
<dbReference type="Ensembl" id="ENST00000456476.5">
    <molecule id="Q13838-1"/>
    <property type="protein sequence ID" value="ENSP00000400326.1"/>
    <property type="gene ID" value="ENSG00000225073.10"/>
</dbReference>
<dbReference type="Ensembl" id="ENST00000456666.5">
    <molecule id="Q13838-1"/>
    <property type="protein sequence ID" value="ENSP00000394160.1"/>
    <property type="gene ID" value="ENSG00000230624.10"/>
</dbReference>
<dbReference type="Ensembl" id="ENST00000458640.5">
    <molecule id="Q13838-1"/>
    <property type="protein sequence ID" value="ENSP00000416269.1"/>
    <property type="gene ID" value="ENSG00000198563.14"/>
</dbReference>
<dbReference type="GeneID" id="7919"/>
<dbReference type="KEGG" id="hsa:7919"/>
<dbReference type="MANE-Select" id="ENST00000396172.6">
    <property type="protein sequence ID" value="ENSP00000379475.1"/>
    <property type="RefSeq nucleotide sequence ID" value="NM_004640.7"/>
    <property type="RefSeq protein sequence ID" value="NP_004631.1"/>
</dbReference>
<dbReference type="UCSC" id="uc003ntt.4">
    <molecule id="Q13838-1"/>
    <property type="organism name" value="human"/>
</dbReference>
<dbReference type="AGR" id="HGNC:13917"/>
<dbReference type="CTD" id="7919"/>
<dbReference type="DisGeNET" id="7919"/>
<dbReference type="GeneCards" id="DDX39B"/>
<dbReference type="HGNC" id="HGNC:13917">
    <property type="gene designation" value="DDX39B"/>
</dbReference>
<dbReference type="HPA" id="ENSG00000198563">
    <property type="expression patterns" value="Low tissue specificity"/>
</dbReference>
<dbReference type="MIM" id="142560">
    <property type="type" value="gene"/>
</dbReference>
<dbReference type="neXtProt" id="NX_Q13838"/>
<dbReference type="OpenTargets" id="ENSG00000198563"/>
<dbReference type="PharmGKB" id="PA25262"/>
<dbReference type="VEuPathDB" id="HostDB:ENSG00000198563"/>
<dbReference type="eggNOG" id="KOG0329">
    <property type="taxonomic scope" value="Eukaryota"/>
</dbReference>
<dbReference type="GeneTree" id="ENSGT00940000160110"/>
<dbReference type="HOGENOM" id="CLU_003041_1_0_1"/>
<dbReference type="InParanoid" id="Q13838"/>
<dbReference type="OMA" id="KMANLHR"/>
<dbReference type="OrthoDB" id="196131at2759"/>
<dbReference type="PAN-GO" id="Q13838">
    <property type="GO annotations" value="4 GO annotations based on evolutionary models"/>
</dbReference>
<dbReference type="PhylomeDB" id="Q13838"/>
<dbReference type="TreeFam" id="TF300442"/>
<dbReference type="PathwayCommons" id="Q13838"/>
<dbReference type="Reactome" id="R-HSA-159236">
    <property type="pathway name" value="Transport of Mature mRNA derived from an Intron-Containing Transcript"/>
</dbReference>
<dbReference type="Reactome" id="R-HSA-72163">
    <property type="pathway name" value="mRNA Splicing - Major Pathway"/>
</dbReference>
<dbReference type="Reactome" id="R-HSA-72187">
    <property type="pathway name" value="mRNA 3'-end processing"/>
</dbReference>
<dbReference type="Reactome" id="R-HSA-73856">
    <property type="pathway name" value="RNA Polymerase II Transcription Termination"/>
</dbReference>
<dbReference type="Reactome" id="R-HSA-9013418">
    <property type="pathway name" value="RHOBTB2 GTPase cycle"/>
</dbReference>
<dbReference type="SABIO-RK" id="Q13838"/>
<dbReference type="SignaLink" id="Q13838"/>
<dbReference type="SIGNOR" id="Q13838"/>
<dbReference type="BioGRID-ORCS" id="7919">
    <property type="hits" value="467 hits in 1168 CRISPR screens"/>
</dbReference>
<dbReference type="CD-CODE" id="804901D1">
    <property type="entry name" value="Nuclear speckle"/>
</dbReference>
<dbReference type="CD-CODE" id="91857CE7">
    <property type="entry name" value="Nucleolus"/>
</dbReference>
<dbReference type="CD-CODE" id="DEE660B4">
    <property type="entry name" value="Stress granule"/>
</dbReference>
<dbReference type="EvolutionaryTrace" id="Q13838"/>
<dbReference type="GeneWiki" id="BAT1"/>
<dbReference type="GenomeRNAi" id="7919"/>
<dbReference type="Pharos" id="Q13838">
    <property type="development level" value="Tbio"/>
</dbReference>
<dbReference type="PRO" id="PR:Q13838"/>
<dbReference type="Proteomes" id="UP000005640">
    <property type="component" value="Chromosome 6"/>
</dbReference>
<dbReference type="RNAct" id="Q13838">
    <property type="molecule type" value="protein"/>
</dbReference>
<dbReference type="Bgee" id="ENSG00000198563">
    <property type="expression patterns" value="Expressed in granulocyte and 179 other cell types or tissues"/>
</dbReference>
<dbReference type="ExpressionAtlas" id="Q13838">
    <property type="expression patterns" value="baseline and differential"/>
</dbReference>
<dbReference type="GO" id="GO:0005737">
    <property type="term" value="C:cytoplasm"/>
    <property type="evidence" value="ECO:0007669"/>
    <property type="project" value="UniProtKB-SubCell"/>
</dbReference>
<dbReference type="GO" id="GO:0016607">
    <property type="term" value="C:nuclear speck"/>
    <property type="evidence" value="ECO:0000314"/>
    <property type="project" value="HPA"/>
</dbReference>
<dbReference type="GO" id="GO:0005654">
    <property type="term" value="C:nucleoplasm"/>
    <property type="evidence" value="ECO:0000304"/>
    <property type="project" value="Reactome"/>
</dbReference>
<dbReference type="GO" id="GO:0005634">
    <property type="term" value="C:nucleus"/>
    <property type="evidence" value="ECO:0000314"/>
    <property type="project" value="UniProtKB"/>
</dbReference>
<dbReference type="GO" id="GO:0005681">
    <property type="term" value="C:spliceosomal complex"/>
    <property type="evidence" value="ECO:0000314"/>
    <property type="project" value="BHF-UCL"/>
</dbReference>
<dbReference type="GO" id="GO:0000346">
    <property type="term" value="C:transcription export complex"/>
    <property type="evidence" value="ECO:0000314"/>
    <property type="project" value="UniProtKB"/>
</dbReference>
<dbReference type="GO" id="GO:0005687">
    <property type="term" value="C:U4 snRNP"/>
    <property type="evidence" value="ECO:0000314"/>
    <property type="project" value="BHF-UCL"/>
</dbReference>
<dbReference type="GO" id="GO:0005688">
    <property type="term" value="C:U6 snRNP"/>
    <property type="evidence" value="ECO:0000314"/>
    <property type="project" value="BHF-UCL"/>
</dbReference>
<dbReference type="GO" id="GO:0005524">
    <property type="term" value="F:ATP binding"/>
    <property type="evidence" value="ECO:0007669"/>
    <property type="project" value="UniProtKB-KW"/>
</dbReference>
<dbReference type="GO" id="GO:0016887">
    <property type="term" value="F:ATP hydrolysis activity"/>
    <property type="evidence" value="ECO:0000269"/>
    <property type="project" value="Reactome"/>
</dbReference>
<dbReference type="GO" id="GO:0008186">
    <property type="term" value="F:ATP-dependent activity, acting on RNA"/>
    <property type="evidence" value="ECO:0000314"/>
    <property type="project" value="UniProtKB"/>
</dbReference>
<dbReference type="GO" id="GO:0043008">
    <property type="term" value="F:ATP-dependent protein binding"/>
    <property type="evidence" value="ECO:0000314"/>
    <property type="project" value="BHF-UCL"/>
</dbReference>
<dbReference type="GO" id="GO:0042802">
    <property type="term" value="F:identical protein binding"/>
    <property type="evidence" value="ECO:0000353"/>
    <property type="project" value="IntAct"/>
</dbReference>
<dbReference type="GO" id="GO:0003729">
    <property type="term" value="F:mRNA binding"/>
    <property type="evidence" value="ECO:0000318"/>
    <property type="project" value="GO_Central"/>
</dbReference>
<dbReference type="GO" id="GO:0003723">
    <property type="term" value="F:RNA binding"/>
    <property type="evidence" value="ECO:0007005"/>
    <property type="project" value="UniProtKB"/>
</dbReference>
<dbReference type="GO" id="GO:0003724">
    <property type="term" value="F:RNA helicase activity"/>
    <property type="evidence" value="ECO:0000314"/>
    <property type="project" value="UniProtKB"/>
</dbReference>
<dbReference type="GO" id="GO:0030621">
    <property type="term" value="F:U4 snRNA binding"/>
    <property type="evidence" value="ECO:0000314"/>
    <property type="project" value="BHF-UCL"/>
</dbReference>
<dbReference type="GO" id="GO:0017070">
    <property type="term" value="F:U6 snRNA binding"/>
    <property type="evidence" value="ECO:0000314"/>
    <property type="project" value="BHF-UCL"/>
</dbReference>
<dbReference type="GO" id="GO:0006406">
    <property type="term" value="P:mRNA export from nucleus"/>
    <property type="evidence" value="ECO:0000314"/>
    <property type="project" value="UniProtKB"/>
</dbReference>
<dbReference type="GO" id="GO:0000398">
    <property type="term" value="P:mRNA splicing, via spliceosome"/>
    <property type="evidence" value="ECO:0000316"/>
    <property type="project" value="UniProtKB"/>
</dbReference>
<dbReference type="GO" id="GO:0006405">
    <property type="term" value="P:RNA export from nucleus"/>
    <property type="evidence" value="ECO:0000304"/>
    <property type="project" value="Reactome"/>
</dbReference>
<dbReference type="GO" id="GO:0008380">
    <property type="term" value="P:RNA splicing"/>
    <property type="evidence" value="ECO:0000314"/>
    <property type="project" value="BHF-UCL"/>
</dbReference>
<dbReference type="GO" id="GO:0000245">
    <property type="term" value="P:spliceosomal complex assembly"/>
    <property type="evidence" value="ECO:0000314"/>
    <property type="project" value="BHF-UCL"/>
</dbReference>
<dbReference type="CDD" id="cd17950">
    <property type="entry name" value="DEADc_DDX39"/>
    <property type="match status" value="1"/>
</dbReference>
<dbReference type="CDD" id="cd18787">
    <property type="entry name" value="SF2_C_DEAD"/>
    <property type="match status" value="1"/>
</dbReference>
<dbReference type="DisProt" id="DP02724"/>
<dbReference type="FunFam" id="3.40.50.300:FF:000111">
    <property type="entry name" value="DEAD-box ATP-dependent RNA helicase"/>
    <property type="match status" value="1"/>
</dbReference>
<dbReference type="FunFam" id="3.40.50.300:FF:000168">
    <property type="entry name" value="DEAD-box ATP-dependent RNA helicase 56-like"/>
    <property type="match status" value="1"/>
</dbReference>
<dbReference type="Gene3D" id="3.40.50.300">
    <property type="entry name" value="P-loop containing nucleotide triphosphate hydrolases"/>
    <property type="match status" value="2"/>
</dbReference>
<dbReference type="InterPro" id="IPR011545">
    <property type="entry name" value="DEAD/DEAH_box_helicase_dom"/>
</dbReference>
<dbReference type="InterPro" id="IPR014001">
    <property type="entry name" value="Helicase_ATP-bd"/>
</dbReference>
<dbReference type="InterPro" id="IPR001650">
    <property type="entry name" value="Helicase_C-like"/>
</dbReference>
<dbReference type="InterPro" id="IPR027417">
    <property type="entry name" value="P-loop_NTPase"/>
</dbReference>
<dbReference type="InterPro" id="IPR014014">
    <property type="entry name" value="RNA_helicase_DEAD_Q_motif"/>
</dbReference>
<dbReference type="PANTHER" id="PTHR47958">
    <property type="entry name" value="ATP-DEPENDENT RNA HELICASE DBP3"/>
    <property type="match status" value="1"/>
</dbReference>
<dbReference type="Pfam" id="PF00270">
    <property type="entry name" value="DEAD"/>
    <property type="match status" value="1"/>
</dbReference>
<dbReference type="Pfam" id="PF00271">
    <property type="entry name" value="Helicase_C"/>
    <property type="match status" value="1"/>
</dbReference>
<dbReference type="SMART" id="SM00487">
    <property type="entry name" value="DEXDc"/>
    <property type="match status" value="1"/>
</dbReference>
<dbReference type="SMART" id="SM00490">
    <property type="entry name" value="HELICc"/>
    <property type="match status" value="1"/>
</dbReference>
<dbReference type="SUPFAM" id="SSF52540">
    <property type="entry name" value="P-loop containing nucleoside triphosphate hydrolases"/>
    <property type="match status" value="1"/>
</dbReference>
<dbReference type="PROSITE" id="PS51192">
    <property type="entry name" value="HELICASE_ATP_BIND_1"/>
    <property type="match status" value="1"/>
</dbReference>
<dbReference type="PROSITE" id="PS51194">
    <property type="entry name" value="HELICASE_CTER"/>
    <property type="match status" value="1"/>
</dbReference>
<dbReference type="PROSITE" id="PS51195">
    <property type="entry name" value="Q_MOTIF"/>
    <property type="match status" value="1"/>
</dbReference>
<feature type="initiator methionine" description="Removed" evidence="39 42">
    <location>
        <position position="1"/>
    </location>
</feature>
<feature type="chain" id="PRO_0000055071" description="Spliceosome RNA helicase DDX39B">
    <location>
        <begin position="2"/>
        <end position="428"/>
    </location>
</feature>
<feature type="domain" description="Helicase ATP-binding" evidence="1">
    <location>
        <begin position="76"/>
        <end position="249"/>
    </location>
</feature>
<feature type="domain" description="Helicase C-terminal" evidence="2">
    <location>
        <begin position="261"/>
        <end position="422"/>
    </location>
</feature>
<feature type="region of interest" description="Disordered" evidence="3">
    <location>
        <begin position="1"/>
        <end position="31"/>
    </location>
</feature>
<feature type="short sequence motif" description="Q motif">
    <location>
        <begin position="45"/>
        <end position="73"/>
    </location>
</feature>
<feature type="short sequence motif" description="DECD box">
    <location>
        <begin position="196"/>
        <end position="199"/>
    </location>
</feature>
<feature type="compositionally biased region" description="Acidic residues" evidence="3">
    <location>
        <begin position="1"/>
        <end position="19"/>
    </location>
</feature>
<feature type="binding site">
    <location>
        <begin position="89"/>
        <end position="96"/>
    </location>
    <ligand>
        <name>ATP</name>
        <dbReference type="ChEBI" id="CHEBI:30616"/>
    </ligand>
</feature>
<feature type="modified residue" description="N-acetylalanine" evidence="39 42">
    <location>
        <position position="2"/>
    </location>
</feature>
<feature type="modified residue" description="N6-acetyllysine; alternate" evidence="40">
    <location>
        <position position="36"/>
    </location>
</feature>
<feature type="modified residue" description="Phosphoserine" evidence="41 43">
    <location>
        <position position="38"/>
    </location>
</feature>
<feature type="modified residue" description="Phosphoserine" evidence="43">
    <location>
        <position position="41"/>
    </location>
</feature>
<feature type="modified residue" description="Phosphothreonine" evidence="41 43">
    <location>
        <position position="172"/>
    </location>
</feature>
<feature type="cross-link" description="Glycyl lysine isopeptide (Lys-Gly) (interchain with G-Cter in SUMO2); alternate" evidence="44 45">
    <location>
        <position position="36"/>
    </location>
</feature>
<feature type="splice variant" id="VSP_026347" description="In isoform 2." evidence="28">
    <original>V</original>
    <variation>VYLGRVLGRGFWLGLV</variation>
    <location>
        <position position="114"/>
    </location>
</feature>
<feature type="mutagenesis site" description="Loss of ATPase and helicase activity." evidence="13">
    <original>GKT</original>
    <variation>AAA</variation>
    <location>
        <begin position="94"/>
        <end position="96"/>
    </location>
</feature>
<feature type="mutagenesis site" description="Loss of ATPase and helicase activity." evidence="13 14">
    <original>K</original>
    <variation>A</variation>
    <location>
        <position position="95"/>
    </location>
</feature>
<feature type="mutagenesis site" description="Loss of ATPase and helicase activity." evidence="13">
    <original>E</original>
    <variation>A</variation>
    <location>
        <position position="197"/>
    </location>
</feature>
<feature type="mutagenesis site" description="No effect on ATPase activity." evidence="7">
    <original>C</original>
    <variation>A</variation>
    <location>
        <position position="198"/>
    </location>
</feature>
<feature type="mutagenesis site" description="Increased ATPase activity and loss of helicase activity." evidence="13">
    <original>D</original>
    <variation>A</variation>
    <location>
        <position position="199"/>
    </location>
</feature>
<feature type="mutagenesis site" description="Decreased ATPase activity and loss of helicase activity." evidence="13">
    <original>SAT</original>
    <variation>AAA</variation>
    <location>
        <begin position="228"/>
        <end position="230"/>
    </location>
</feature>
<feature type="mutagenesis site" description="Abolishes interaction with SARNP; when associated with 2-A--T-258 del." evidence="26">
    <original>D</original>
    <variation>R</variation>
    <location>
        <position position="283"/>
    </location>
</feature>
<feature type="sequence conflict" description="In Ref. 3; BAD96632." evidence="28" ref="3">
    <original>Q</original>
    <variation>R</variation>
    <location>
        <position position="289"/>
    </location>
</feature>
<feature type="helix" evidence="48">
    <location>
        <begin position="47"/>
        <end position="50"/>
    </location>
</feature>
<feature type="helix" evidence="47">
    <location>
        <begin position="54"/>
        <end position="62"/>
    </location>
</feature>
<feature type="helix" evidence="47">
    <location>
        <begin position="70"/>
        <end position="80"/>
    </location>
</feature>
<feature type="strand" evidence="47">
    <location>
        <begin position="85"/>
        <end position="88"/>
    </location>
</feature>
<feature type="helix" evidence="47">
    <location>
        <begin position="95"/>
        <end position="106"/>
    </location>
</feature>
<feature type="strand" evidence="47">
    <location>
        <begin position="116"/>
        <end position="119"/>
    </location>
</feature>
<feature type="helix" evidence="47">
    <location>
        <begin position="123"/>
        <end position="136"/>
    </location>
</feature>
<feature type="turn" evidence="47">
    <location>
        <begin position="137"/>
        <end position="139"/>
    </location>
</feature>
<feature type="strand" evidence="47">
    <location>
        <begin position="145"/>
        <end position="149"/>
    </location>
</feature>
<feature type="helix" evidence="47">
    <location>
        <begin position="154"/>
        <end position="163"/>
    </location>
</feature>
<feature type="strand" evidence="47">
    <location>
        <begin position="167"/>
        <end position="171"/>
    </location>
</feature>
<feature type="helix" evidence="47">
    <location>
        <begin position="173"/>
        <end position="181"/>
    </location>
</feature>
<feature type="strand" evidence="49">
    <location>
        <begin position="183"/>
        <end position="185"/>
    </location>
</feature>
<feature type="strand" evidence="47">
    <location>
        <begin position="192"/>
        <end position="197"/>
    </location>
</feature>
<feature type="helix" evidence="47">
    <location>
        <begin position="198"/>
        <end position="202"/>
    </location>
</feature>
<feature type="helix" evidence="47">
    <location>
        <begin position="205"/>
        <end position="216"/>
    </location>
</feature>
<feature type="strand" evidence="47">
    <location>
        <begin position="220"/>
        <end position="229"/>
    </location>
</feature>
<feature type="turn" evidence="47">
    <location>
        <begin position="233"/>
        <end position="235"/>
    </location>
</feature>
<feature type="helix" evidence="47">
    <location>
        <begin position="236"/>
        <end position="240"/>
    </location>
</feature>
<feature type="strand" evidence="47">
    <location>
        <begin position="247"/>
        <end position="250"/>
    </location>
</feature>
<feature type="helix" evidence="51">
    <location>
        <begin position="254"/>
        <end position="257"/>
    </location>
</feature>
<feature type="strand" evidence="46">
    <location>
        <begin position="263"/>
        <end position="268"/>
    </location>
</feature>
<feature type="helix" evidence="46">
    <location>
        <begin position="271"/>
        <end position="273"/>
    </location>
</feature>
<feature type="helix" evidence="46">
    <location>
        <begin position="274"/>
        <end position="284"/>
    </location>
</feature>
<feature type="strand" evidence="46">
    <location>
        <begin position="288"/>
        <end position="293"/>
    </location>
</feature>
<feature type="helix" evidence="46">
    <location>
        <begin position="297"/>
        <end position="309"/>
    </location>
</feature>
<feature type="strand" evidence="46">
    <location>
        <begin position="314"/>
        <end position="317"/>
    </location>
</feature>
<feature type="strand" evidence="50">
    <location>
        <begin position="319"/>
        <end position="321"/>
    </location>
</feature>
<feature type="helix" evidence="46">
    <location>
        <begin position="323"/>
        <end position="334"/>
    </location>
</feature>
<feature type="strand" evidence="49">
    <location>
        <begin position="335"/>
        <end position="337"/>
    </location>
</feature>
<feature type="strand" evidence="46">
    <location>
        <begin position="339"/>
        <end position="345"/>
    </location>
</feature>
<feature type="strand" evidence="51">
    <location>
        <begin position="348"/>
        <end position="350"/>
    </location>
</feature>
<feature type="helix" evidence="46">
    <location>
        <begin position="353"/>
        <end position="355"/>
    </location>
</feature>
<feature type="strand" evidence="46">
    <location>
        <begin position="357"/>
        <end position="363"/>
    </location>
</feature>
<feature type="helix" evidence="46">
    <location>
        <begin position="368"/>
        <end position="378"/>
    </location>
</feature>
<feature type="helix" evidence="46">
    <location>
        <begin position="380"/>
        <end position="382"/>
    </location>
</feature>
<feature type="strand" evidence="46">
    <location>
        <begin position="386"/>
        <end position="391"/>
    </location>
</feature>
<feature type="helix" evidence="46">
    <location>
        <begin position="394"/>
        <end position="407"/>
    </location>
</feature>
<feature type="strand" evidence="46">
    <location>
        <begin position="411"/>
        <end position="413"/>
    </location>
</feature>
<feature type="strand" evidence="49">
    <location>
        <begin position="417"/>
        <end position="419"/>
    </location>
</feature>
<feature type="helix" evidence="48">
    <location>
        <begin position="420"/>
        <end position="422"/>
    </location>
</feature>
<reference key="1">
    <citation type="journal article" date="1995" name="Genomics">
        <title>The BAT1 gene in the MHC encodes an evolutionarily conserved putative nuclear RNA helicase of the DEAD family.</title>
        <authorList>
            <person name="Peelman L."/>
            <person name="Chardon P."/>
            <person name="Nunes M."/>
            <person name="Renard C."/>
            <person name="Geffrotin C."/>
            <person name="Vaiman M."/>
            <person name="van Zeveren A."/>
            <person name="Coppieters W."/>
            <person name="van de Weghe A."/>
            <person name="Bouquet Y."/>
            <person name="Choy W."/>
            <person name="Strominger J."/>
            <person name="Spies T."/>
        </authorList>
    </citation>
    <scope>NUCLEOTIDE SEQUENCE [MRNA] (ISOFORM 1)</scope>
    <scope>SUBCELLULAR LOCATION</scope>
</reference>
<reference key="2">
    <citation type="submission" date="2003-08" db="EMBL/GenBank/DDBJ databases">
        <title>Cloning of human full-length CDSs in BD Creator(TM) system donor vector.</title>
        <authorList>
            <person name="Kalnine N."/>
            <person name="Chen X."/>
            <person name="Rolfs A."/>
            <person name="Halleck A."/>
            <person name="Hines L."/>
            <person name="Eisenstein S."/>
            <person name="Koundinya M."/>
            <person name="Raphael J."/>
            <person name="Moreira D."/>
            <person name="Kelley T."/>
            <person name="LaBaer J."/>
            <person name="Lin Y."/>
            <person name="Phelan M."/>
            <person name="Farmer A."/>
        </authorList>
    </citation>
    <scope>NUCLEOTIDE SEQUENCE [LARGE SCALE MRNA] (ISOFORM 1)</scope>
</reference>
<reference key="3">
    <citation type="submission" date="2005-04" db="EMBL/GenBank/DDBJ databases">
        <authorList>
            <person name="Suzuki Y."/>
            <person name="Sugano S."/>
            <person name="Totoki Y."/>
            <person name="Toyoda A."/>
            <person name="Takeda T."/>
            <person name="Sakaki Y."/>
            <person name="Tanaka A."/>
            <person name="Yokoyama S."/>
        </authorList>
    </citation>
    <scope>NUCLEOTIDE SEQUENCE [LARGE SCALE MRNA] (ISOFORM 1)</scope>
    <source>
        <tissue>Kidney epithelium</tissue>
    </source>
</reference>
<reference key="4">
    <citation type="journal article" date="2006" name="Genetics">
        <title>Rapid evolution of major histocompatibility complex class I genes in primates generates new disease alleles in humans via hitchhiking diversity.</title>
        <authorList>
            <person name="Shiina T."/>
            <person name="Ota M."/>
            <person name="Shimizu S."/>
            <person name="Katsuyama Y."/>
            <person name="Hashimoto N."/>
            <person name="Takasu M."/>
            <person name="Anzai T."/>
            <person name="Kulski J.K."/>
            <person name="Kikkawa E."/>
            <person name="Naruse T."/>
            <person name="Kimura N."/>
            <person name="Yanagiya K."/>
            <person name="Watanabe A."/>
            <person name="Hosomichi K."/>
            <person name="Kohara S."/>
            <person name="Iwamoto C."/>
            <person name="Umehara Y."/>
            <person name="Meyer A."/>
            <person name="Wanner V."/>
            <person name="Sano K."/>
            <person name="Macquin C."/>
            <person name="Ikeo K."/>
            <person name="Tokunaga K."/>
            <person name="Gojobori T."/>
            <person name="Inoko H."/>
            <person name="Bahram S."/>
        </authorList>
    </citation>
    <scope>NUCLEOTIDE SEQUENCE [LARGE SCALE GENOMIC DNA]</scope>
</reference>
<reference key="5">
    <citation type="journal article" date="2003" name="Nature">
        <title>The DNA sequence and analysis of human chromosome 6.</title>
        <authorList>
            <person name="Mungall A.J."/>
            <person name="Palmer S.A."/>
            <person name="Sims S.K."/>
            <person name="Edwards C.A."/>
            <person name="Ashurst J.L."/>
            <person name="Wilming L."/>
            <person name="Jones M.C."/>
            <person name="Horton R."/>
            <person name="Hunt S.E."/>
            <person name="Scott C.E."/>
            <person name="Gilbert J.G.R."/>
            <person name="Clamp M.E."/>
            <person name="Bethel G."/>
            <person name="Milne S."/>
            <person name="Ainscough R."/>
            <person name="Almeida J.P."/>
            <person name="Ambrose K.D."/>
            <person name="Andrews T.D."/>
            <person name="Ashwell R.I.S."/>
            <person name="Babbage A.K."/>
            <person name="Bagguley C.L."/>
            <person name="Bailey J."/>
            <person name="Banerjee R."/>
            <person name="Barker D.J."/>
            <person name="Barlow K.F."/>
            <person name="Bates K."/>
            <person name="Beare D.M."/>
            <person name="Beasley H."/>
            <person name="Beasley O."/>
            <person name="Bird C.P."/>
            <person name="Blakey S.E."/>
            <person name="Bray-Allen S."/>
            <person name="Brook J."/>
            <person name="Brown A.J."/>
            <person name="Brown J.Y."/>
            <person name="Burford D.C."/>
            <person name="Burrill W."/>
            <person name="Burton J."/>
            <person name="Carder C."/>
            <person name="Carter N.P."/>
            <person name="Chapman J.C."/>
            <person name="Clark S.Y."/>
            <person name="Clark G."/>
            <person name="Clee C.M."/>
            <person name="Clegg S."/>
            <person name="Cobley V."/>
            <person name="Collier R.E."/>
            <person name="Collins J.E."/>
            <person name="Colman L.K."/>
            <person name="Corby N.R."/>
            <person name="Coville G.J."/>
            <person name="Culley K.M."/>
            <person name="Dhami P."/>
            <person name="Davies J."/>
            <person name="Dunn M."/>
            <person name="Earthrowl M.E."/>
            <person name="Ellington A.E."/>
            <person name="Evans K.A."/>
            <person name="Faulkner L."/>
            <person name="Francis M.D."/>
            <person name="Frankish A."/>
            <person name="Frankland J."/>
            <person name="French L."/>
            <person name="Garner P."/>
            <person name="Garnett J."/>
            <person name="Ghori M.J."/>
            <person name="Gilby L.M."/>
            <person name="Gillson C.J."/>
            <person name="Glithero R.J."/>
            <person name="Grafham D.V."/>
            <person name="Grant M."/>
            <person name="Gribble S."/>
            <person name="Griffiths C."/>
            <person name="Griffiths M.N.D."/>
            <person name="Hall R."/>
            <person name="Halls K.S."/>
            <person name="Hammond S."/>
            <person name="Harley J.L."/>
            <person name="Hart E.A."/>
            <person name="Heath P.D."/>
            <person name="Heathcott R."/>
            <person name="Holmes S.J."/>
            <person name="Howden P.J."/>
            <person name="Howe K.L."/>
            <person name="Howell G.R."/>
            <person name="Huckle E."/>
            <person name="Humphray S.J."/>
            <person name="Humphries M.D."/>
            <person name="Hunt A.R."/>
            <person name="Johnson C.M."/>
            <person name="Joy A.A."/>
            <person name="Kay M."/>
            <person name="Keenan S.J."/>
            <person name="Kimberley A.M."/>
            <person name="King A."/>
            <person name="Laird G.K."/>
            <person name="Langford C."/>
            <person name="Lawlor S."/>
            <person name="Leongamornlert D.A."/>
            <person name="Leversha M."/>
            <person name="Lloyd C.R."/>
            <person name="Lloyd D.M."/>
            <person name="Loveland J.E."/>
            <person name="Lovell J."/>
            <person name="Martin S."/>
            <person name="Mashreghi-Mohammadi M."/>
            <person name="Maslen G.L."/>
            <person name="Matthews L."/>
            <person name="McCann O.T."/>
            <person name="McLaren S.J."/>
            <person name="McLay K."/>
            <person name="McMurray A."/>
            <person name="Moore M.J.F."/>
            <person name="Mullikin J.C."/>
            <person name="Niblett D."/>
            <person name="Nickerson T."/>
            <person name="Novik K.L."/>
            <person name="Oliver K."/>
            <person name="Overton-Larty E.K."/>
            <person name="Parker A."/>
            <person name="Patel R."/>
            <person name="Pearce A.V."/>
            <person name="Peck A.I."/>
            <person name="Phillimore B.J.C.T."/>
            <person name="Phillips S."/>
            <person name="Plumb R.W."/>
            <person name="Porter K.M."/>
            <person name="Ramsey Y."/>
            <person name="Ranby S.A."/>
            <person name="Rice C.M."/>
            <person name="Ross M.T."/>
            <person name="Searle S.M."/>
            <person name="Sehra H.K."/>
            <person name="Sheridan E."/>
            <person name="Skuce C.D."/>
            <person name="Smith S."/>
            <person name="Smith M."/>
            <person name="Spraggon L."/>
            <person name="Squares S.L."/>
            <person name="Steward C.A."/>
            <person name="Sycamore N."/>
            <person name="Tamlyn-Hall G."/>
            <person name="Tester J."/>
            <person name="Theaker A.J."/>
            <person name="Thomas D.W."/>
            <person name="Thorpe A."/>
            <person name="Tracey A."/>
            <person name="Tromans A."/>
            <person name="Tubby B."/>
            <person name="Wall M."/>
            <person name="Wallis J.M."/>
            <person name="West A.P."/>
            <person name="White S.S."/>
            <person name="Whitehead S.L."/>
            <person name="Whittaker H."/>
            <person name="Wild A."/>
            <person name="Willey D.J."/>
            <person name="Wilmer T.E."/>
            <person name="Wood J.M."/>
            <person name="Wray P.W."/>
            <person name="Wyatt J.C."/>
            <person name="Young L."/>
            <person name="Younger R.M."/>
            <person name="Bentley D.R."/>
            <person name="Coulson A."/>
            <person name="Durbin R.M."/>
            <person name="Hubbard T."/>
            <person name="Sulston J.E."/>
            <person name="Dunham I."/>
            <person name="Rogers J."/>
            <person name="Beck S."/>
        </authorList>
    </citation>
    <scope>NUCLEOTIDE SEQUENCE [LARGE SCALE GENOMIC DNA]</scope>
</reference>
<reference key="6">
    <citation type="submission" date="2005-07" db="EMBL/GenBank/DDBJ databases">
        <authorList>
            <person name="Mural R.J."/>
            <person name="Istrail S."/>
            <person name="Sutton G.G."/>
            <person name="Florea L."/>
            <person name="Halpern A.L."/>
            <person name="Mobarry C.M."/>
            <person name="Lippert R."/>
            <person name="Walenz B."/>
            <person name="Shatkay H."/>
            <person name="Dew I."/>
            <person name="Miller J.R."/>
            <person name="Flanigan M.J."/>
            <person name="Edwards N.J."/>
            <person name="Bolanos R."/>
            <person name="Fasulo D."/>
            <person name="Halldorsson B.V."/>
            <person name="Hannenhalli S."/>
            <person name="Turner R."/>
            <person name="Yooseph S."/>
            <person name="Lu F."/>
            <person name="Nusskern D.R."/>
            <person name="Shue B.C."/>
            <person name="Zheng X.H."/>
            <person name="Zhong F."/>
            <person name="Delcher A.L."/>
            <person name="Huson D.H."/>
            <person name="Kravitz S.A."/>
            <person name="Mouchard L."/>
            <person name="Reinert K."/>
            <person name="Remington K.A."/>
            <person name="Clark A.G."/>
            <person name="Waterman M.S."/>
            <person name="Eichler E.E."/>
            <person name="Adams M.D."/>
            <person name="Hunkapiller M.W."/>
            <person name="Myers E.W."/>
            <person name="Venter J.C."/>
        </authorList>
    </citation>
    <scope>NUCLEOTIDE SEQUENCE [LARGE SCALE GENOMIC DNA]</scope>
</reference>
<reference key="7">
    <citation type="journal article" date="2004" name="Genome Res.">
        <title>The status, quality, and expansion of the NIH full-length cDNA project: the Mammalian Gene Collection (MGC).</title>
        <authorList>
            <consortium name="The MGC Project Team"/>
        </authorList>
    </citation>
    <scope>NUCLEOTIDE SEQUENCE [LARGE SCALE MRNA] (ISOFORM 1)</scope>
    <source>
        <tissue>Muscle</tissue>
    </source>
</reference>
<reference key="8">
    <citation type="submission" date="1997-10" db="EMBL/GenBank/DDBJ databases">
        <title>Homo sapiens BAT1 (BAT1) gene, partial cds; and PERB18 pseudogene, complete sequence.</title>
        <authorList>
            <person name="Allcock R.J.N."/>
            <person name="Price P."/>
            <person name="Gaudieri S."/>
            <person name="Leelayuwat C."/>
            <person name="Witt C.S."/>
            <person name="Dawkins R.L."/>
        </authorList>
    </citation>
    <scope>NUCLEOTIDE SEQUENCE [GENOMIC DNA] OF 145-428</scope>
</reference>
<reference key="9">
    <citation type="journal article" date="1997" name="Genes Dev.">
        <title>U2AF65 recruits a novel human DEAD box protein required for the U2 snRNP-branchpoint interaction.</title>
        <authorList>
            <person name="Fleckner J."/>
            <person name="Zhang M."/>
            <person name="Valcarcel J."/>
            <person name="Green M.R."/>
        </authorList>
    </citation>
    <scope>FUNCTION</scope>
    <scope>INTERACTION WITH U2AF2 AND THE SPLICEOSOME</scope>
    <scope>SUBCELLULAR LOCATION</scope>
</reference>
<reference key="10">
    <citation type="journal article" date="2001" name="Nature">
        <title>Pre-mRNA splicing and mRNA export linked by direct interactions between UAP56 and Aly.</title>
        <authorList>
            <person name="Luo M.-J."/>
            <person name="Zhou Z."/>
            <person name="Magni K."/>
            <person name="Christoforides C."/>
            <person name="Rappsilber J."/>
            <person name="Mann M."/>
            <person name="Reed R."/>
        </authorList>
    </citation>
    <scope>FUNCTION</scope>
    <scope>INTERACTION WITH ALYREF/THOC4 AND THE SPLICEOSOME</scope>
    <scope>SUBCELLULAR LOCATION</scope>
</reference>
<reference key="11">
    <citation type="journal article" date="2003" name="J. Biol. Chem.">
        <title>An evolutionarily conserved role for SRm160 in 3'-end processing that functions independently of exon junction complex formation.</title>
        <authorList>
            <person name="McCracken S."/>
            <person name="Longman D."/>
            <person name="Johnstone I.L."/>
            <person name="Caceres J.F."/>
            <person name="Blencowe B.J."/>
        </authorList>
    </citation>
    <scope>INTERACTION WITH RBM8A; RNPS1; SRRM1 AND ALYREF/THOC4</scope>
</reference>
<reference key="12">
    <citation type="journal article" date="2004" name="Genomics">
        <title>Analysis of a high-throughput yeast two-hybrid system and its use to predict the function of intracellular proteins encoded within the human MHC class III region.</title>
        <authorList>
            <person name="Lehner B."/>
            <person name="Semple J.I."/>
            <person name="Brown S.E."/>
            <person name="Counsell D."/>
            <person name="Campbell R.D."/>
            <person name="Sanderson C.M."/>
        </authorList>
    </citation>
    <scope>HOMODIMERIZATION</scope>
    <scope>INTERACTION WITH ALYREF/THOC4 AND DDX39A</scope>
</reference>
<reference key="13">
    <citation type="journal article" date="2005" name="Cancer Res.">
        <title>Linking transcriptional elongation and messenger RNA export to metastatic breast cancers.</title>
        <authorList>
            <person name="Guo S."/>
            <person name="Hakimi M.A."/>
            <person name="Baillat D."/>
            <person name="Chen X."/>
            <person name="Farber M.J."/>
            <person name="Klein-Szanto A.J."/>
            <person name="Cooch N.S."/>
            <person name="Godwin A.K."/>
            <person name="Shiekhattar R."/>
        </authorList>
    </citation>
    <scope>IDENTIFICATION IN THE TREX COMPLEX</scope>
    <scope>FUNCTION OF THE TREX COMPLEX</scope>
    <scope>IDENTIFICATION BY MASS SPECTROMETRY</scope>
</reference>
<reference key="14">
    <citation type="journal article" date="2005" name="Genes Dev.">
        <title>Recruitment of the human TREX complex to mRNA during splicing.</title>
        <authorList>
            <person name="Masuda S."/>
            <person name="Das R."/>
            <person name="Cheng H."/>
            <person name="Hurt E."/>
            <person name="Dorman N."/>
            <person name="Reed R."/>
        </authorList>
    </citation>
    <scope>IDENTIFICATION IN THE TREX COMPLEX</scope>
    <scope>FUNCTION OF THE TREX COMPLEX</scope>
    <scope>IDENTIFICATION BY MASS SPECTROMETRY</scope>
    <scope>INTERACTION WITH ALYREF/THOC4</scope>
    <scope>DOMAIN</scope>
</reference>
<reference key="15">
    <citation type="journal article" date="2005" name="Mol. Cell. Biol.">
        <title>Human hHpr1/p84/Thoc1 regulates transcriptional elongation and physically links RNA polymerase II and RNA processing factors.</title>
        <authorList>
            <person name="Li Y."/>
            <person name="Wang X."/>
            <person name="Zhang X."/>
            <person name="Goodrich D.W."/>
        </authorList>
    </citation>
    <scope>INTERACTION WITH THOC1</scope>
    <scope>SUBCELLULAR LOCATION</scope>
</reference>
<reference key="16">
    <citation type="journal article" date="2006" name="Cell">
        <title>Human mRNA export machinery recruited to the 5' end of mRNA.</title>
        <authorList>
            <person name="Cheng H."/>
            <person name="Dufu K."/>
            <person name="Lee C.-S."/>
            <person name="Hsu J.L."/>
            <person name="Dias A."/>
            <person name="Reed R."/>
        </authorList>
    </citation>
    <scope>FUNCTION OF THE TREX COMPLEX</scope>
</reference>
<reference key="17">
    <citation type="journal article" date="2006" name="Mol. Cell. Biol.">
        <title>The UL69 transactivator protein of human cytomegalovirus interacts with DEXD/H-Box RNA helicase UAP56 to promote cytoplasmic accumulation of unspliced RNA.</title>
        <authorList>
            <person name="Lischka P."/>
            <person name="Toth Z."/>
            <person name="Thomas M."/>
            <person name="Mueller R."/>
            <person name="Stamminger T."/>
        </authorList>
    </citation>
    <scope>INTERACTION WITH HHV-5 PROTEIN UL69</scope>
</reference>
<reference key="18">
    <citation type="journal article" date="2007" name="J. Biol. Chem.">
        <title>Biochemical characterization of the ATPase and helicase activity of UAP56, an essential pre-mRNA splicing and mRNA export factor.</title>
        <authorList>
            <person name="Shen J."/>
            <person name="Zhang L."/>
            <person name="Zhao R."/>
        </authorList>
    </citation>
    <scope>FUNCTION</scope>
    <scope>BIOPHYSICOCHEMICAL PROPERTIES</scope>
    <scope>MUTAGENESIS OF 94-GLY--THR-96; LYS-95; GLU-197; ASP-199 AND 228-SER--THR-230</scope>
</reference>
<reference key="19">
    <citation type="journal article" date="2008" name="Mol. Cell. Biol.">
        <title>ATP-dependent recruitment of export factor Aly/REF onto intronless mRNAs by RNA helicase UAP56.</title>
        <authorList>
            <person name="Taniguchi I."/>
            <person name="Ohno M."/>
        </authorList>
    </citation>
    <scope>FUNCTION</scope>
    <scope>INTERACTION WITH ALYREF</scope>
    <scope>CATALYTIC ACTIVITY</scope>
    <scope>MUTAGENESIS OF LYS-95</scope>
</reference>
<reference key="20">
    <citation type="journal article" date="2008" name="PLoS Pathog.">
        <title>Recruitment of the complete hTREX complex is required for Kaposi's sarcoma-associated herpesvirus intronless mRNA nuclear export and virus replication.</title>
        <authorList>
            <person name="Boyne J.R."/>
            <person name="Colgan K.J."/>
            <person name="Whitehouse A."/>
        </authorList>
    </citation>
    <scope>FUNCTION OF THE TREX COMPLEX (MICROBIAL INFECTION)</scope>
</reference>
<reference key="21">
    <citation type="journal article" date="2008" name="Proc. Natl. Acad. Sci. U.S.A.">
        <title>A quantitative atlas of mitotic phosphorylation.</title>
        <authorList>
            <person name="Dephoure N."/>
            <person name="Zhou C."/>
            <person name="Villen J."/>
            <person name="Beausoleil S.A."/>
            <person name="Bakalarski C.E."/>
            <person name="Elledge S.J."/>
            <person name="Gygi S.P."/>
        </authorList>
    </citation>
    <scope>IDENTIFICATION BY MASS SPECTROMETRY [LARGE SCALE ANALYSIS]</scope>
    <source>
        <tissue>Cervix carcinoma</tissue>
    </source>
</reference>
<reference key="22">
    <citation type="journal article" date="2009" name="Anal. Chem.">
        <title>Lys-N and trypsin cover complementary parts of the phosphoproteome in a refined SCX-based approach.</title>
        <authorList>
            <person name="Gauci S."/>
            <person name="Helbig A.O."/>
            <person name="Slijper M."/>
            <person name="Krijgsveld J."/>
            <person name="Heck A.J."/>
            <person name="Mohammed S."/>
        </authorList>
    </citation>
    <scope>ACETYLATION [LARGE SCALE ANALYSIS] AT ALA-2</scope>
    <scope>CLEAVAGE OF INITIATOR METHIONINE [LARGE SCALE ANALYSIS]</scope>
    <scope>IDENTIFICATION BY MASS SPECTROMETRY [LARGE SCALE ANALYSIS]</scope>
</reference>
<reference key="23">
    <citation type="journal article" date="2009" name="Curr. Biol.">
        <title>UIF, a new mRNA export adaptor that works together with REF/ALY, requires FACT for recruitment to mRNA.</title>
        <authorList>
            <person name="Hautbergue G.M."/>
            <person name="Hung M.L."/>
            <person name="Walsh M.J."/>
            <person name="Snijders A.P."/>
            <person name="Chang C.T."/>
            <person name="Jones R."/>
            <person name="Ponting C.P."/>
            <person name="Dickman M.J."/>
            <person name="Wilson S.A."/>
        </authorList>
    </citation>
    <scope>INTERACTION WITH FYTTD1</scope>
</reference>
<reference key="24">
    <citation type="journal article" date="2009" name="Science">
        <title>Lysine acetylation targets protein complexes and co-regulates major cellular functions.</title>
        <authorList>
            <person name="Choudhary C."/>
            <person name="Kumar C."/>
            <person name="Gnad F."/>
            <person name="Nielsen M.L."/>
            <person name="Rehman M."/>
            <person name="Walther T.C."/>
            <person name="Olsen J.V."/>
            <person name="Mann M."/>
        </authorList>
    </citation>
    <scope>ACETYLATION [LARGE SCALE ANALYSIS] AT LYS-36</scope>
    <scope>IDENTIFICATION BY MASS SPECTROMETRY [LARGE SCALE ANALYSIS]</scope>
</reference>
<reference key="25">
    <citation type="journal article" date="2010" name="Genes Dev.">
        <title>ATP is required for interactions between UAP56 and two conserved mRNA export proteins, Aly and CIP29, to assemble the TREX complex.</title>
        <authorList>
            <person name="Dufu K."/>
            <person name="Livingstone M.J."/>
            <person name="Seebacher J."/>
            <person name="Gygi S.P."/>
            <person name="Wilson S.A."/>
            <person name="Reed R."/>
        </authorList>
    </citation>
    <scope>FUNCTION</scope>
    <scope>INTERACTION WITH ALYREF AND SARNP</scope>
</reference>
<reference key="26">
    <citation type="journal article" date="2010" name="Sci. Signal.">
        <title>Quantitative phosphoproteomics reveals widespread full phosphorylation site occupancy during mitosis.</title>
        <authorList>
            <person name="Olsen J.V."/>
            <person name="Vermeulen M."/>
            <person name="Santamaria A."/>
            <person name="Kumar C."/>
            <person name="Miller M.L."/>
            <person name="Jensen L.J."/>
            <person name="Gnad F."/>
            <person name="Cox J."/>
            <person name="Jensen T.S."/>
            <person name="Nigg E.A."/>
            <person name="Brunak S."/>
            <person name="Mann M."/>
        </authorList>
    </citation>
    <scope>PHOSPHORYLATION [LARGE SCALE ANALYSIS] AT SER-38 AND THR-172</scope>
    <scope>IDENTIFICATION BY MASS SPECTROMETRY [LARGE SCALE ANALYSIS]</scope>
    <source>
        <tissue>Cervix carcinoma</tissue>
    </source>
</reference>
<reference key="27">
    <citation type="journal article" date="2011" name="BMC Syst. Biol.">
        <title>Initial characterization of the human central proteome.</title>
        <authorList>
            <person name="Burkard T.R."/>
            <person name="Planyavsky M."/>
            <person name="Kaupe I."/>
            <person name="Breitwieser F.P."/>
            <person name="Buerckstuemmer T."/>
            <person name="Bennett K.L."/>
            <person name="Superti-Furga G."/>
            <person name="Colinge J."/>
        </authorList>
    </citation>
    <scope>IDENTIFICATION BY MASS SPECTROMETRY [LARGE SCALE ANALYSIS]</scope>
</reference>
<reference key="28">
    <citation type="journal article" date="2011" name="J. Biol. Chem.">
        <title>Interferon-induced antiviral protein MxA interacts with the cellular RNA helicases UAP56 and URH49.</title>
        <authorList>
            <person name="Wisskirchen C."/>
            <person name="Ludersdorfer T.H."/>
            <person name="Mueller D.A."/>
            <person name="Moritz E."/>
            <person name="Pavlovic J."/>
        </authorList>
    </citation>
    <scope>SUBCELLULAR LOCATION</scope>
    <scope>INTERACTION WITH MX1</scope>
</reference>
<reference key="29">
    <citation type="journal article" date="2011" name="PLoS Genet.">
        <title>Genome instability and transcription elongation impairment in human cells depleted of THO/TREX.</title>
        <authorList>
            <person name="Dominguez-Sanchez M.S."/>
            <person name="Barroso S."/>
            <person name="Gomez-Gonzalez B."/>
            <person name="Luna R."/>
            <person name="Aguilera A."/>
        </authorList>
    </citation>
    <scope>FUNCTION</scope>
</reference>
<reference key="30">
    <citation type="journal article" date="2012" name="Mol. Cell. Proteomics">
        <title>Comparative large-scale characterisation of plant vs. mammal proteins reveals similar and idiosyncratic N-alpha acetylation features.</title>
        <authorList>
            <person name="Bienvenut W.V."/>
            <person name="Sumpton D."/>
            <person name="Martinez A."/>
            <person name="Lilla S."/>
            <person name="Espagne C."/>
            <person name="Meinnel T."/>
            <person name="Giglione C."/>
        </authorList>
    </citation>
    <scope>ACETYLATION [LARGE SCALE ANALYSIS] AT ALA-2</scope>
    <scope>CLEAVAGE OF INITIATOR METHIONINE [LARGE SCALE ANALYSIS]</scope>
    <scope>IDENTIFICATION BY MASS SPECTROMETRY [LARGE SCALE ANALYSIS]</scope>
</reference>
<reference key="31">
    <citation type="journal article" date="2012" name="PLoS ONE">
        <title>The proteins PDIP3 and ZC11A associate with the human TREX complex in an ATP-dependent manner and function in mRNA export.</title>
        <authorList>
            <person name="Folco E.G."/>
            <person name="Lee C.S."/>
            <person name="Dufu K."/>
            <person name="Yamazaki T."/>
            <person name="Reed R."/>
        </authorList>
    </citation>
    <scope>INTERACTION WITH POLDIP3</scope>
</reference>
<reference key="32">
    <citation type="journal article" date="2013" name="EMBO J.">
        <title>Chtop is a component of the dynamic TREX mRNA export complex.</title>
        <authorList>
            <person name="Chang C.T."/>
            <person name="Hautbergue G.M."/>
            <person name="Walsh M.J."/>
            <person name="Viphakone N."/>
            <person name="van Dijk T.B."/>
            <person name="Philipsen S."/>
            <person name="Wilson S.A."/>
        </authorList>
    </citation>
    <scope>FUNCTION</scope>
    <scope>INTERACTION WITH CHTOP</scope>
</reference>
<reference key="33">
    <citation type="journal article" date="2013" name="J. Proteome Res.">
        <title>Toward a comprehensive characterization of a human cancer cell phosphoproteome.</title>
        <authorList>
            <person name="Zhou H."/>
            <person name="Di Palma S."/>
            <person name="Preisinger C."/>
            <person name="Peng M."/>
            <person name="Polat A.N."/>
            <person name="Heck A.J."/>
            <person name="Mohammed S."/>
        </authorList>
    </citation>
    <scope>PHOSPHORYLATION [LARGE SCALE ANALYSIS] AT SER-38; SER-41 AND THR-172</scope>
    <scope>IDENTIFICATION BY MASS SPECTROMETRY [LARGE SCALE ANALYSIS]</scope>
    <source>
        <tissue>Cervix carcinoma</tissue>
        <tissue>Erythroleukemia</tissue>
    </source>
</reference>
<reference key="34">
    <citation type="journal article" date="2013" name="Nucleic Acids Res.">
        <title>Aly and THO are required for assembly of the human TREX complex and association of TREX components with the spliced mRNA.</title>
        <authorList>
            <person name="Chi B."/>
            <person name="Wang Q."/>
            <person name="Wu G."/>
            <person name="Tan M."/>
            <person name="Wang L."/>
            <person name="Shi M."/>
            <person name="Chang X."/>
            <person name="Cheng H."/>
        </authorList>
    </citation>
    <scope>FUNCTION</scope>
</reference>
<reference key="35">
    <citation type="journal article" date="2014" name="J. Proteomics">
        <title>An enzyme assisted RP-RPLC approach for in-depth analysis of human liver phosphoproteome.</title>
        <authorList>
            <person name="Bian Y."/>
            <person name="Song C."/>
            <person name="Cheng K."/>
            <person name="Dong M."/>
            <person name="Wang F."/>
            <person name="Huang J."/>
            <person name="Sun D."/>
            <person name="Wang L."/>
            <person name="Ye M."/>
            <person name="Zou H."/>
        </authorList>
    </citation>
    <scope>IDENTIFICATION BY MASS SPECTROMETRY [LARGE SCALE ANALYSIS]</scope>
    <source>
        <tissue>Liver</tissue>
    </source>
</reference>
<reference key="36">
    <citation type="journal article" date="2015" name="Mol. Cell. Proteomics">
        <title>System-wide analysis of SUMOylation dynamics in response to replication stress reveals novel small ubiquitin-like modified target proteins and acceptor lysines relevant for genome stability.</title>
        <authorList>
            <person name="Xiao Z."/>
            <person name="Chang J.G."/>
            <person name="Hendriks I.A."/>
            <person name="Sigurdsson J.O."/>
            <person name="Olsen J.V."/>
            <person name="Vertegaal A.C."/>
        </authorList>
    </citation>
    <scope>SUMOYLATION [LARGE SCALE ANALYSIS] AT LYS-36</scope>
    <scope>IDENTIFICATION BY MASS SPECTROMETRY [LARGE SCALE ANALYSIS]</scope>
</reference>
<reference key="37">
    <citation type="journal article" date="2015" name="Nucleic Acids Res.">
        <title>Luzp4 defines a new mRNA export pathway in cancer cells.</title>
        <authorList>
            <person name="Viphakone N."/>
            <person name="Cumberbatch M.G."/>
            <person name="Livingstone M.J."/>
            <person name="Heath P.R."/>
            <person name="Dickman M.J."/>
            <person name="Catto J.W."/>
            <person name="Wilson S.A."/>
        </authorList>
    </citation>
    <scope>INTERACTION WITH LUZP4</scope>
</reference>
<reference key="38">
    <citation type="journal article" date="2017" name="Nat. Struct. Mol. Biol.">
        <title>Site-specific mapping of the human SUMO proteome reveals co-modification with phosphorylation.</title>
        <authorList>
            <person name="Hendriks I.A."/>
            <person name="Lyon D."/>
            <person name="Young C."/>
            <person name="Jensen L.J."/>
            <person name="Vertegaal A.C."/>
            <person name="Nielsen M.L."/>
        </authorList>
    </citation>
    <scope>SUMOYLATION [LARGE SCALE ANALYSIS] AT LYS-36</scope>
    <scope>IDENTIFICATION BY MASS SPECTROMETRY [LARGE SCALE ANALYSIS]</scope>
</reference>
<reference evidence="32 33 34" key="39">
    <citation type="journal article" date="2004" name="Proc. Natl. Acad. Sci. U.S.A.">
        <title>Crystal structure of the human ATP-dependent splicing and export factor UAP56.</title>
        <authorList>
            <person name="Shi H."/>
            <person name="Cordin O."/>
            <person name="Minder C.M."/>
            <person name="Linder P."/>
            <person name="Xu R.-M."/>
        </authorList>
    </citation>
    <scope>X-RAY CRYSTALLOGRAPHY (1.95 ANGSTROMS) OF 44-428 IN COMPLEX WITH ADP</scope>
    <scope>FUNCTION</scope>
    <scope>MUTAGENESIS OF CYS-198</scope>
</reference>
<reference evidence="30 31" key="40">
    <citation type="journal article" date="2004" name="Structure">
        <title>Crystal structure of UAP56, a DExD/H-box protein involved in pre-mRNA splicing and mRNA export.</title>
        <authorList>
            <person name="Zhao R."/>
            <person name="Shen J."/>
            <person name="Green M.R."/>
            <person name="MacMorris M."/>
            <person name="Blumenthal T."/>
        </authorList>
    </citation>
    <scope>X-RAY CRYSTALLOGRAPHY (1.9 ANGSTROMS) OF 34-428</scope>
    <scope>DIMERIZATION</scope>
</reference>
<reference evidence="35" key="41">
    <citation type="journal article" date="2020" name="Elife">
        <title>Structure of the human core transcription-export complex reveals a hub for multivalent interactions.</title>
        <authorList>
            <person name="Puehringer T."/>
            <person name="Hohmann U."/>
            <person name="Fin L."/>
            <person name="Pacheco-Fiallos B."/>
            <person name="Schellhaas U."/>
            <person name="Brennecke J."/>
            <person name="Plaschka C."/>
        </authorList>
    </citation>
    <scope>STRUCTURE BY ELECTRON MICROSCOPY (3.30 ANGSTROMS) OF 256-425</scope>
    <scope>FUNCTION</scope>
    <scope>SUBUNIT</scope>
</reference>
<reference evidence="38" key="42">
    <citation type="journal article" date="2023" name="Cell Rep.">
        <title>Structural basis for high-order complex of SARNP and DDX39B to facilitate mRNP assembly.</title>
        <authorList>
            <person name="Xie Y."/>
            <person name="Gao S."/>
            <person name="Zhang K."/>
            <person name="Bhat P."/>
            <person name="Clarke B.P."/>
            <person name="Batten K."/>
            <person name="Mei M."/>
            <person name="Gazzara M."/>
            <person name="Shay J.W."/>
            <person name="Lynch K.W."/>
            <person name="Angelos A.E."/>
            <person name="Hill P.S."/>
            <person name="Ivey A.L."/>
            <person name="Fontoura B.M.A."/>
            <person name="Ren Y."/>
        </authorList>
    </citation>
    <scope>X-RAY CRYSTALLOGRAPHY (2.50 ANGSTROMS) OF 44-428 IN COMPLEX WITH YEAST THO1; RNA AND ADP</scope>
    <scope>FUNCTION</scope>
    <scope>INTERACTION WITH SARNP</scope>
    <scope>MUTAGENESIS OF ASP-283</scope>
</reference>
<reference evidence="36 37" key="43">
    <citation type="journal article" date="2023" name="Nature">
        <title>mRNA recognition and packaging by the human transcription-export complex.</title>
        <authorList>
            <person name="Pacheco-Fiallos B."/>
            <person name="Vorlander M.K."/>
            <person name="Riabov-Bassat D."/>
            <person name="Fin L."/>
            <person name="O'Reilly F.J."/>
            <person name="Ayala F.I."/>
            <person name="Schellhaas U."/>
            <person name="Rappsilber J."/>
            <person name="Plaschka C."/>
        </authorList>
    </citation>
    <scope>STRUCTURE BY ELECTRON MICROSCOPY (3.45 ANGSTROMS) OF 256-425 IN TREX COMPLEX</scope>
    <scope>SUBUNIT</scope>
</reference>
<accession>Q13838</accession>
<accession>B0S8C0</accession>
<accession>O43496</accession>
<accession>Q0EFA1</accession>
<accession>Q2L6F9</accession>
<accession>Q53GL9</accession>
<accession>Q5RJ64</accession>
<accession>Q5RJ66</accession>
<accession>Q5ST94</accession>
<accession>Q5STB4</accession>
<accession>Q5STB5</accession>
<accession>Q5STB7</accession>
<accession>Q5STB8</accession>
<accession>Q5STU4</accession>
<accession>Q5STU5</accession>
<accession>Q5STU6</accession>
<accession>Q5STU8</accession>
<accession>Q71V76</accession>
<proteinExistence type="evidence at protein level"/>
<organism>
    <name type="scientific">Homo sapiens</name>
    <name type="common">Human</name>
    <dbReference type="NCBI Taxonomy" id="9606"/>
    <lineage>
        <taxon>Eukaryota</taxon>
        <taxon>Metazoa</taxon>
        <taxon>Chordata</taxon>
        <taxon>Craniata</taxon>
        <taxon>Vertebrata</taxon>
        <taxon>Euteleostomi</taxon>
        <taxon>Mammalia</taxon>
        <taxon>Eutheria</taxon>
        <taxon>Euarchontoglires</taxon>
        <taxon>Primates</taxon>
        <taxon>Haplorrhini</taxon>
        <taxon>Catarrhini</taxon>
        <taxon>Hominidae</taxon>
        <taxon>Homo</taxon>
    </lineage>
</organism>
<protein>
    <recommendedName>
        <fullName evidence="28">Spliceosome RNA helicase DDX39B</fullName>
        <ecNumber evidence="14">3.6.4.13</ecNumber>
    </recommendedName>
    <alternativeName>
        <fullName>56 kDa U2AF65-associated protein</fullName>
    </alternativeName>
    <alternativeName>
        <fullName>ATP-dependent RNA helicase p47</fullName>
    </alternativeName>
    <alternativeName>
        <fullName>DEAD box protein UAP56</fullName>
    </alternativeName>
    <alternativeName>
        <fullName>HLA-B-associated transcript 1 protein</fullName>
    </alternativeName>
</protein>
<gene>
    <name evidence="29" type="primary">DDX39B</name>
    <name type="synonym">BAT1</name>
    <name type="synonym">UAP56</name>
</gene>
<name>DX39B_HUMAN</name>
<sequence>MAENDVDNELLDYEDDEVETAAGGDGAEAPAKKDVKGSYVSIHSSGFRDFLLKPELLRAIVDCGFEHPSEVQHECIPQAILGMDVLCQAKSGMGKTAVFVLATLQQLEPVTGQVSVLVMCHTRELAFQISKEYERFSKYMPNVKVAVFFGGLSIKKDEEVLKKNCPHIVVGTPGRILALARNKSLNLKHIKHFILDECDKMLEQLDMRRDVQEIFRMTPHEKQVMMFSATLSKEIRPVCRKFMQDPMEIFVDDETKLTLHGLQQYYVKLKDNEKNRKLFDLLDVLEFNQVVIFVKSVQRCIALAQLLVEQNFPAIAIHRGMPQEERLSRYQQFKDFQRRILVATNLFGRGMDIERVNIAFNYDMPEDSDTYLHRVARAGRFGTKGLAITFVSDENDAKILNDVQDRFEVNISELPDEIDISSYIEQTR</sequence>
<comment type="function">
    <text evidence="4 7 8 10 12 13 14 17 19 21 22 24 26 27">Involved in nuclear export of spliced and unspliced mRNA (PubMed:15833825, PubMed:15998806, PubMed:17190602). Component of the TREX complex which is thought to couple mRNA transcription, processing and nuclear export, and specifically associates with spliced mRNA and not with unspliced pre-mRNA (PubMed:15833825, PubMed:15998806, PubMed:17190602). The TREX complex is recruited to spliced mRNAs by a transcription-independent mechanism, binds to mRNA upstream of the exon-junction complex (EJC) and is recruited in a splicing- and cap-dependent manner to a region near the 5' end of the mRNA where it functions in mRNA export to the cytoplasm via the TAP/NXF1 pathway (PubMed:15833825, PubMed:15998806, PubMed:17190602). The THOC1-THOC2-THOC3 core complex alone is sufficient to promote ATPase activity of DDX39B; in the complex THOC2 is the only component that directly interacts with DDX39B (PubMed:33191911). Associates with SARNP/CIP29, which facilitates RNA binding of DDX39B and likely plays a role in mRNA export (PubMed:37578863). May undergo several rounds of ATP hydrolysis during assembly of TREX to drive subsequent loading of components such as ALYREF/THOC4 and CHTOP onto mRNA. Also associates with pre-mRNA independent of ALYREF/THOC4. Involved in the nuclear export of intronless mRNA; the ATP-bound form is proposed to recruit export adapter ALYREF/THOC4 to intronless mRNA; its ATPase activity is cooperatively stimulated by RNA and ALYREF/THOC4 and ATP hydrolysis is thought to trigger the dissociation from RNA to allow the association of ALYREF/THOC4 and the NXF1-NXT1 heterodimer. Involved in transcription elongation and genome stability.</text>
</comment>
<comment type="function">
    <text evidence="22 27">Splice factor that is required for the first ATP-dependent step in spliceosome assembly and for the interaction of U2 snRNP with the branchpoint. Has both RNA-stimulated ATP binding/hydrolysis activity and ATP-dependent RNA unwinding activity. Even with the stimulation of RNA, the ATPase activity is weak. Can only hydrolyze ATP but not other NTPs. The RNA stimulation of ATPase activity does not have a strong preference for the sequence and length of the RNA. However, ssRNA stimulates the ATPase activity much more strongly than dsRNA. Can unwind 5' or 3' overhangs or blunt end RNA duplexes in vitro. The ATPase and helicase activities are not influenced by U2AF2; the effect of ALYREF/THOC4 is reported conflictingly with [PubMed:23299939] reporting a stimulatory effect.</text>
</comment>
<comment type="function">
    <text evidence="15">(Microbial infection) The TREX complex is essential for the export of Kaposi's sarcoma-associated herpesvirus (KSHV) intronless mRNAs and infectious virus production.</text>
</comment>
<comment type="catalytic activity">
    <reaction evidence="14">
        <text>ATP + H2O = ADP + phosphate + H(+)</text>
        <dbReference type="Rhea" id="RHEA:13065"/>
        <dbReference type="ChEBI" id="CHEBI:15377"/>
        <dbReference type="ChEBI" id="CHEBI:15378"/>
        <dbReference type="ChEBI" id="CHEBI:30616"/>
        <dbReference type="ChEBI" id="CHEBI:43474"/>
        <dbReference type="ChEBI" id="CHEBI:456216"/>
        <dbReference type="EC" id="3.6.4.13"/>
    </reaction>
</comment>
<comment type="biophysicochemical properties">
    <kinetics>
        <KM evidence="13">3.3 uM for ATP</KM>
        <Vmax evidence="13">0.126 uM/min/mg enzyme with ATP as substrate</Vmax>
    </kinetics>
</comment>
<comment type="subunit">
    <text evidence="4 5 6 8 9 10 14 16 17 18 20 21 22 23 24 25 26 27">Homodimer, and heterodimer with DDX39A (PubMed:11675789, PubMed:14667819, PubMed:15833825). DDX39B interacts with the THO subcomplex to form the THO-DDX39B complex which multimerizes into a 28-subunit tetrameric assembly (PubMed:33191911, PubMed:37020021). Component of the transcription/export (TREX) complex at least composed of ALYREF/THOC4, DDX39B, SARNP/CIP29, CHTOP and the THO subcomplex; in the complex interacts with THOC2 (PubMed:33191911, PubMed:37020021). THOC1-THOC2-THOC3-DDX39B subcomplex is sufficient for the interaction with export factor NXF1-NXT1 (PubMed:33191911). TREX seems to have a dynamic structure involving ATP-dependent remodeling (PubMed:23222130). Within the TREX complex bridges ALYREF/THOC4 and the THO subcomplex, and, in a ATP-dependent manner, ALYREF/THOC4 and SARNP/CIP29 (PubMed:11675789, PubMed:14667819, PubMed:15833825, PubMed:15998806, PubMed:17984224, PubMed:20844015, PubMed:23299939). Component of the spliceosome. Interacts directly with U2AF2 (PubMed:9242493). Interacts with RBM8A, RNPS1 and SRRM1, FYTTD1/UIF, THOC1, MX1 and POLDIP3 (PubMed:12944400, PubMed:15870275, PubMed:19836239, PubMed:21859714, PubMed:22928037). Interacts with LUZP4 (PubMed:25662211). Interacts with SARNP/CIP29 (via the C-terminal domain); the interaction is direct and facilitates RNA binding of DDX39B (PubMed:37578863).</text>
</comment>
<comment type="subunit">
    <text evidence="11">(Microbial infection) Interacts with human cytomegalovirus/HHV-5 protein UL69.</text>
</comment>
<comment type="interaction">
    <interactant intactId="EBI-348622">
        <id>Q13838</id>
    </interactant>
    <interactant intactId="EBI-347640">
        <id>Q86V81</id>
        <label>ALYREF</label>
    </interactant>
    <organismsDiffer>false</organismsDiffer>
    <experiments>5</experiments>
</comment>
<comment type="interaction">
    <interactant intactId="EBI-348622">
        <id>Q13838</id>
    </interactant>
    <interactant intactId="EBI-1048422">
        <id>Q9BZZ5</id>
        <label>API5</label>
    </interactant>
    <organismsDiffer>false</organismsDiffer>
    <experiments>2</experiments>
</comment>
<comment type="interaction">
    <interactant intactId="EBI-348622">
        <id>Q13838</id>
    </interactant>
    <interactant intactId="EBI-347794">
        <id>Q9Y3Y2</id>
        <label>CHTOP</label>
    </interactant>
    <organismsDiffer>false</organismsDiffer>
    <experiments>8</experiments>
</comment>
<comment type="interaction">
    <interactant intactId="EBI-348622">
        <id>Q13838</id>
    </interactant>
    <interactant intactId="EBI-11984237">
        <id>Q9Y3Y2-3</id>
        <label>CHTOP</label>
    </interactant>
    <organismsDiffer>false</organismsDiffer>
    <experiments>5</experiments>
</comment>
<comment type="interaction">
    <interactant intactId="EBI-348622">
        <id>Q13838</id>
    </interactant>
    <interactant intactId="EBI-348253">
        <id>O00148</id>
        <label>DDX39A</label>
    </interactant>
    <organismsDiffer>false</organismsDiffer>
    <experiments>6</experiments>
</comment>
<comment type="interaction">
    <interactant intactId="EBI-348622">
        <id>Q13838</id>
    </interactant>
    <interactant intactId="EBI-348622">
        <id>Q13838</id>
        <label>DDX39B</label>
    </interactant>
    <organismsDiffer>false</organismsDiffer>
    <experiments>4</experiments>
</comment>
<comment type="interaction">
    <interactant intactId="EBI-348622">
        <id>Q13838</id>
    </interactant>
    <interactant intactId="EBI-724553">
        <id>Q96QD9</id>
        <label>FYTTD1</label>
    </interactant>
    <organismsDiffer>false</organismsDiffer>
    <experiments>5</experiments>
</comment>
<comment type="interaction">
    <interactant intactId="EBI-348622">
        <id>Q13838</id>
    </interactant>
    <interactant intactId="EBI-10198848">
        <id>Q9P127</id>
        <label>LUZP4</label>
    </interactant>
    <organismsDiffer>false</organismsDiffer>
    <experiments>3</experiments>
</comment>
<comment type="interaction">
    <interactant intactId="EBI-348622">
        <id>Q13838</id>
    </interactant>
    <interactant intactId="EBI-2340927">
        <id>P78317</id>
        <label>RNF4</label>
    </interactant>
    <organismsDiffer>false</organismsDiffer>
    <experiments>3</experiments>
</comment>
<comment type="interaction">
    <interactant intactId="EBI-348622">
        <id>Q13838</id>
    </interactant>
    <interactant intactId="EBI-347495">
        <id>P82979</id>
        <label>SARNP</label>
    </interactant>
    <organismsDiffer>false</organismsDiffer>
    <experiments>7</experiments>
</comment>
<comment type="interaction">
    <interactant intactId="EBI-348622">
        <id>Q13838</id>
    </interactant>
    <interactant intactId="EBI-727004">
        <id>O00560</id>
        <label>SDCBP</label>
    </interactant>
    <organismsDiffer>false</organismsDiffer>
    <experiments>3</experiments>
</comment>
<comment type="interaction">
    <interactant intactId="EBI-348622">
        <id>Q13838</id>
    </interactant>
    <interactant intactId="EBI-607085">
        <id>P09012</id>
        <label>SNRPA</label>
    </interactant>
    <organismsDiffer>false</organismsDiffer>
    <experiments>4</experiments>
</comment>
<comment type="interaction">
    <interactant intactId="EBI-348622">
        <id>Q13838</id>
    </interactant>
    <interactant intactId="EBI-11097439">
        <id>P26368-2</id>
        <label>U2AF2</label>
    </interactant>
    <organismsDiffer>false</organismsDiffer>
    <experiments>3</experiments>
</comment>
<comment type="interaction">
    <interactant intactId="EBI-348622">
        <id>Q13838</id>
    </interactant>
    <interactant intactId="EBI-10180829">
        <id>Q7KZS0</id>
        <label>UBE2I</label>
    </interactant>
    <organismsDiffer>false</organismsDiffer>
    <experiments>3</experiments>
</comment>
<comment type="subcellular location">
    <subcellularLocation>
        <location>Nucleus</location>
    </subcellularLocation>
    <subcellularLocation>
        <location>Nucleus speckle</location>
    </subcellularLocation>
    <subcellularLocation>
        <location>Cytoplasm</location>
    </subcellularLocation>
    <text>Can translocate to the cytoplasm in the presence of MX1. TREX complex assembly seems to occur in regions surrounding nuclear speckles known as perispeckles.</text>
</comment>
<comment type="alternative products">
    <event type="alternative splicing"/>
    <isoform>
        <id>Q13838-1</id>
        <name>1</name>
        <sequence type="displayed"/>
    </isoform>
    <isoform>
        <id>Q13838-2</id>
        <name>2</name>
        <sequence type="described" ref="VSP_026347"/>
    </isoform>
</comment>
<comment type="domain">
    <text evidence="10">The helicase C-terminal domain mediates interaction with ALYREF/THOC4.</text>
</comment>
<comment type="similarity">
    <text evidence="28">Belongs to the DEAD box helicase family. DECD subfamily.</text>
</comment>
<evidence type="ECO:0000255" key="1">
    <source>
        <dbReference type="PROSITE-ProRule" id="PRU00541"/>
    </source>
</evidence>
<evidence type="ECO:0000255" key="2">
    <source>
        <dbReference type="PROSITE-ProRule" id="PRU00542"/>
    </source>
</evidence>
<evidence type="ECO:0000256" key="3">
    <source>
        <dbReference type="SAM" id="MobiDB-lite"/>
    </source>
</evidence>
<evidence type="ECO:0000269" key="4">
    <source>
    </source>
</evidence>
<evidence type="ECO:0000269" key="5">
    <source>
    </source>
</evidence>
<evidence type="ECO:0000269" key="6">
    <source>
    </source>
</evidence>
<evidence type="ECO:0000269" key="7">
    <source>
    </source>
</evidence>
<evidence type="ECO:0000269" key="8">
    <source>
    </source>
</evidence>
<evidence type="ECO:0000269" key="9">
    <source>
    </source>
</evidence>
<evidence type="ECO:0000269" key="10">
    <source>
    </source>
</evidence>
<evidence type="ECO:0000269" key="11">
    <source>
    </source>
</evidence>
<evidence type="ECO:0000269" key="12">
    <source>
    </source>
</evidence>
<evidence type="ECO:0000269" key="13">
    <source>
    </source>
</evidence>
<evidence type="ECO:0000269" key="14">
    <source>
    </source>
</evidence>
<evidence type="ECO:0000269" key="15">
    <source>
    </source>
</evidence>
<evidence type="ECO:0000269" key="16">
    <source>
    </source>
</evidence>
<evidence type="ECO:0000269" key="17">
    <source>
    </source>
</evidence>
<evidence type="ECO:0000269" key="18">
    <source>
    </source>
</evidence>
<evidence type="ECO:0000269" key="19">
    <source>
    </source>
</evidence>
<evidence type="ECO:0000269" key="20">
    <source>
    </source>
</evidence>
<evidence type="ECO:0000269" key="21">
    <source>
    </source>
</evidence>
<evidence type="ECO:0000269" key="22">
    <source>
    </source>
</evidence>
<evidence type="ECO:0000269" key="23">
    <source>
    </source>
</evidence>
<evidence type="ECO:0000269" key="24">
    <source>
    </source>
</evidence>
<evidence type="ECO:0000269" key="25">
    <source>
    </source>
</evidence>
<evidence type="ECO:0000269" key="26">
    <source>
    </source>
</evidence>
<evidence type="ECO:0000269" key="27">
    <source>
    </source>
</evidence>
<evidence type="ECO:0000305" key="28"/>
<evidence type="ECO:0000312" key="29">
    <source>
        <dbReference type="HGNC" id="HGNC:13917"/>
    </source>
</evidence>
<evidence type="ECO:0007744" key="30">
    <source>
        <dbReference type="PDB" id="1T5I"/>
    </source>
</evidence>
<evidence type="ECO:0007744" key="31">
    <source>
        <dbReference type="PDB" id="1T6N"/>
    </source>
</evidence>
<evidence type="ECO:0007744" key="32">
    <source>
        <dbReference type="PDB" id="1XTI"/>
    </source>
</evidence>
<evidence type="ECO:0007744" key="33">
    <source>
        <dbReference type="PDB" id="1XTJ"/>
    </source>
</evidence>
<evidence type="ECO:0007744" key="34">
    <source>
        <dbReference type="PDB" id="1XTK"/>
    </source>
</evidence>
<evidence type="ECO:0007744" key="35">
    <source>
        <dbReference type="PDB" id="7APK"/>
    </source>
</evidence>
<evidence type="ECO:0007744" key="36">
    <source>
        <dbReference type="PDB" id="7ZNK"/>
    </source>
</evidence>
<evidence type="ECO:0007744" key="37">
    <source>
        <dbReference type="PDB" id="7ZNL"/>
    </source>
</evidence>
<evidence type="ECO:0007744" key="38">
    <source>
        <dbReference type="PDB" id="8ENK"/>
    </source>
</evidence>
<evidence type="ECO:0007744" key="39">
    <source>
    </source>
</evidence>
<evidence type="ECO:0007744" key="40">
    <source>
    </source>
</evidence>
<evidence type="ECO:0007744" key="41">
    <source>
    </source>
</evidence>
<evidence type="ECO:0007744" key="42">
    <source>
    </source>
</evidence>
<evidence type="ECO:0007744" key="43">
    <source>
    </source>
</evidence>
<evidence type="ECO:0007744" key="44">
    <source>
    </source>
</evidence>
<evidence type="ECO:0007744" key="45">
    <source>
    </source>
</evidence>
<evidence type="ECO:0007829" key="46">
    <source>
        <dbReference type="PDB" id="1T5I"/>
    </source>
</evidence>
<evidence type="ECO:0007829" key="47">
    <source>
        <dbReference type="PDB" id="1T6N"/>
    </source>
</evidence>
<evidence type="ECO:0007829" key="48">
    <source>
        <dbReference type="PDB" id="1XTI"/>
    </source>
</evidence>
<evidence type="ECO:0007829" key="49">
    <source>
        <dbReference type="PDB" id="1XTJ"/>
    </source>
</evidence>
<evidence type="ECO:0007829" key="50">
    <source>
        <dbReference type="PDB" id="1XTK"/>
    </source>
</evidence>
<evidence type="ECO:0007829" key="51">
    <source>
        <dbReference type="PDB" id="8ENK"/>
    </source>
</evidence>
<keyword id="KW-0002">3D-structure</keyword>
<keyword id="KW-0007">Acetylation</keyword>
<keyword id="KW-0025">Alternative splicing</keyword>
<keyword id="KW-0067">ATP-binding</keyword>
<keyword id="KW-0963">Cytoplasm</keyword>
<keyword id="KW-0347">Helicase</keyword>
<keyword id="KW-0378">Hydrolase</keyword>
<keyword id="KW-1017">Isopeptide bond</keyword>
<keyword id="KW-0507">mRNA processing</keyword>
<keyword id="KW-0508">mRNA splicing</keyword>
<keyword id="KW-0509">mRNA transport</keyword>
<keyword id="KW-0547">Nucleotide-binding</keyword>
<keyword id="KW-0539">Nucleus</keyword>
<keyword id="KW-0597">Phosphoprotein</keyword>
<keyword id="KW-1267">Proteomics identification</keyword>
<keyword id="KW-1185">Reference proteome</keyword>
<keyword id="KW-0694">RNA-binding</keyword>
<keyword id="KW-0747">Spliceosome</keyword>
<keyword id="KW-0813">Transport</keyword>
<keyword id="KW-0832">Ubl conjugation</keyword>